<proteinExistence type="inferred from homology"/>
<evidence type="ECO:0000255" key="1">
    <source>
        <dbReference type="HAMAP-Rule" id="MF_00906"/>
    </source>
</evidence>
<comment type="function">
    <text evidence="1">Contributes to the efficiency of the cell division process by stabilizing the polymeric form of the cell division protein FtsZ. Acts by promoting interactions between FtsZ protofilaments and suppressing the GTPase activity of FtsZ.</text>
</comment>
<comment type="subunit">
    <text evidence="1">Interacts directly with FtsZ.</text>
</comment>
<comment type="subcellular location">
    <subcellularLocation>
        <location evidence="1">Cytoplasm</location>
    </subcellularLocation>
</comment>
<comment type="similarity">
    <text evidence="1">Belongs to the ZapC family.</text>
</comment>
<reference key="1">
    <citation type="submission" date="2008-02" db="EMBL/GenBank/DDBJ databases">
        <title>Complete sequence of Shewanella woodyi ATCC 51908.</title>
        <authorList>
            <consortium name="US DOE Joint Genome Institute"/>
            <person name="Copeland A."/>
            <person name="Lucas S."/>
            <person name="Lapidus A."/>
            <person name="Glavina del Rio T."/>
            <person name="Dalin E."/>
            <person name="Tice H."/>
            <person name="Bruce D."/>
            <person name="Goodwin L."/>
            <person name="Pitluck S."/>
            <person name="Sims D."/>
            <person name="Brettin T."/>
            <person name="Detter J.C."/>
            <person name="Han C."/>
            <person name="Kuske C.R."/>
            <person name="Schmutz J."/>
            <person name="Larimer F."/>
            <person name="Land M."/>
            <person name="Hauser L."/>
            <person name="Kyrpides N."/>
            <person name="Lykidis A."/>
            <person name="Zhao J.-S."/>
            <person name="Richardson P."/>
        </authorList>
    </citation>
    <scope>NUCLEOTIDE SEQUENCE [LARGE SCALE GENOMIC DNA]</scope>
    <source>
        <strain>ATCC 51908 / MS32</strain>
    </source>
</reference>
<name>ZAPC_SHEWM</name>
<keyword id="KW-0131">Cell cycle</keyword>
<keyword id="KW-0132">Cell division</keyword>
<keyword id="KW-0963">Cytoplasm</keyword>
<keyword id="KW-1185">Reference proteome</keyword>
<keyword id="KW-0717">Septation</keyword>
<feature type="chain" id="PRO_0000413789" description="Cell division protein ZapC">
    <location>
        <begin position="1"/>
        <end position="181"/>
    </location>
</feature>
<organism>
    <name type="scientific">Shewanella woodyi (strain ATCC 51908 / MS32)</name>
    <dbReference type="NCBI Taxonomy" id="392500"/>
    <lineage>
        <taxon>Bacteria</taxon>
        <taxon>Pseudomonadati</taxon>
        <taxon>Pseudomonadota</taxon>
        <taxon>Gammaproteobacteria</taxon>
        <taxon>Alteromonadales</taxon>
        <taxon>Shewanellaceae</taxon>
        <taxon>Shewanella</taxon>
    </lineage>
</organism>
<dbReference type="EMBL" id="CP000961">
    <property type="protein sequence ID" value="ACA86426.1"/>
    <property type="molecule type" value="Genomic_DNA"/>
</dbReference>
<dbReference type="SMR" id="B1KDM9"/>
<dbReference type="STRING" id="392500.Swoo_2142"/>
<dbReference type="KEGG" id="swd:Swoo_2142"/>
<dbReference type="eggNOG" id="ENOG502Z8AH">
    <property type="taxonomic scope" value="Bacteria"/>
</dbReference>
<dbReference type="HOGENOM" id="CLU_128248_0_0_6"/>
<dbReference type="Proteomes" id="UP000002168">
    <property type="component" value="Chromosome"/>
</dbReference>
<dbReference type="GO" id="GO:0005737">
    <property type="term" value="C:cytoplasm"/>
    <property type="evidence" value="ECO:0007669"/>
    <property type="project" value="UniProtKB-SubCell"/>
</dbReference>
<dbReference type="GO" id="GO:0000917">
    <property type="term" value="P:division septum assembly"/>
    <property type="evidence" value="ECO:0007669"/>
    <property type="project" value="UniProtKB-KW"/>
</dbReference>
<dbReference type="GO" id="GO:0043093">
    <property type="term" value="P:FtsZ-dependent cytokinesis"/>
    <property type="evidence" value="ECO:0007669"/>
    <property type="project" value="UniProtKB-UniRule"/>
</dbReference>
<dbReference type="HAMAP" id="MF_00906">
    <property type="entry name" value="ZapC"/>
    <property type="match status" value="1"/>
</dbReference>
<dbReference type="InterPro" id="IPR009809">
    <property type="entry name" value="ZapC"/>
</dbReference>
<dbReference type="InterPro" id="IPR048372">
    <property type="entry name" value="ZapC_C"/>
</dbReference>
<dbReference type="InterPro" id="IPR048373">
    <property type="entry name" value="ZapC_N"/>
</dbReference>
<dbReference type="Pfam" id="PF07126">
    <property type="entry name" value="ZapC_C"/>
    <property type="match status" value="1"/>
</dbReference>
<dbReference type="Pfam" id="PF21083">
    <property type="entry name" value="ZapC_N"/>
    <property type="match status" value="1"/>
</dbReference>
<dbReference type="PIRSF" id="PIRSF010252">
    <property type="entry name" value="ZapC"/>
    <property type="match status" value="1"/>
</dbReference>
<protein>
    <recommendedName>
        <fullName evidence="1">Cell division protein ZapC</fullName>
    </recommendedName>
</protein>
<gene>
    <name evidence="1" type="primary">zapC</name>
    <name type="ordered locus">Swoo_2142</name>
</gene>
<sequence length="181" mass="20487">MVEIMLLMPKKDWQWRYSDTYGVLSVSLGSEMEFLTPYKSKSLIPDALSELEFSVEHAKFYIDFIELLSKSLTISDAMKVQLALNGTAAHFLLKPQMPKSWFFDTSSMCVYSELGKVFQLKCRGAIAQVLVVETSIQASLVMLLSNELPLNDNKSLMQFECIKVMHDRLHPLKVSRAIAAA</sequence>
<accession>B1KDM9</accession>